<reference key="1">
    <citation type="journal article" date="2004" name="Nat. Biotechnol.">
        <title>The genome sequence of the capnophilic rumen bacterium Mannheimia succiniciproducens.</title>
        <authorList>
            <person name="Hong S.H."/>
            <person name="Kim J.S."/>
            <person name="Lee S.Y."/>
            <person name="In Y.H."/>
            <person name="Choi S.S."/>
            <person name="Rih J.-K."/>
            <person name="Kim C.H."/>
            <person name="Jeong H."/>
            <person name="Hur C.G."/>
            <person name="Kim J.J."/>
        </authorList>
    </citation>
    <scope>NUCLEOTIDE SEQUENCE [LARGE SCALE GENOMIC DNA]</scope>
    <source>
        <strain>KCTC 0769BP / MBEL55E</strain>
    </source>
</reference>
<accession>Q65U60</accession>
<protein>
    <recommendedName>
        <fullName evidence="1">Sulfur carrier protein FdhD</fullName>
    </recommendedName>
</protein>
<organism>
    <name type="scientific">Mannheimia succiniciproducens (strain KCTC 0769BP / MBEL55E)</name>
    <dbReference type="NCBI Taxonomy" id="221988"/>
    <lineage>
        <taxon>Bacteria</taxon>
        <taxon>Pseudomonadati</taxon>
        <taxon>Pseudomonadota</taxon>
        <taxon>Gammaproteobacteria</taxon>
        <taxon>Pasteurellales</taxon>
        <taxon>Pasteurellaceae</taxon>
        <taxon>Basfia</taxon>
    </lineage>
</organism>
<evidence type="ECO:0000255" key="1">
    <source>
        <dbReference type="HAMAP-Rule" id="MF_00187"/>
    </source>
</evidence>
<gene>
    <name evidence="1" type="primary">fdhD</name>
    <name type="ordered locus">MS0893</name>
</gene>
<keyword id="KW-0963">Cytoplasm</keyword>
<keyword id="KW-0501">Molybdenum cofactor biosynthesis</keyword>
<sequence length="281" mass="31100">MIEITKRTISFFKNLTFIKQIDKDTVSDSNNSRFEFIQKEETLAVEMPVALVYNGISHTVMMATPSNLEDFALGFSLAEGVIDRVSDIYGIDVEETCNGVEVQVELATRCFVRLKDLRRTLTGRTGCGICGSEQLEQVTKKLAKLDRTFCFELKKLDGCLALLQQAQTLGKQTGSTHAVGFFSPQGELLAIREDVGRHVALDKLLGWHAKQGKPQGFVLTTSRASYEMVQKTASCGIEMLIAISAATDLAVRMAEECNLTLIGFAREGRATVYTEKVRLKI</sequence>
<proteinExistence type="inferred from homology"/>
<feature type="chain" id="PRO_0000152909" description="Sulfur carrier protein FdhD">
    <location>
        <begin position="1"/>
        <end position="281"/>
    </location>
</feature>
<feature type="active site" description="Cysteine persulfide intermediate" evidence="1">
    <location>
        <position position="127"/>
    </location>
</feature>
<feature type="binding site" evidence="1">
    <location>
        <begin position="264"/>
        <end position="269"/>
    </location>
    <ligand>
        <name>Mo-bis(molybdopterin guanine dinucleotide)</name>
        <dbReference type="ChEBI" id="CHEBI:60539"/>
    </ligand>
</feature>
<dbReference type="EMBL" id="AE016827">
    <property type="protein sequence ID" value="AAU37500.1"/>
    <property type="molecule type" value="Genomic_DNA"/>
</dbReference>
<dbReference type="RefSeq" id="WP_011200070.1">
    <property type="nucleotide sequence ID" value="NC_006300.1"/>
</dbReference>
<dbReference type="SMR" id="Q65U60"/>
<dbReference type="STRING" id="221988.MS0893"/>
<dbReference type="KEGG" id="msu:MS0893"/>
<dbReference type="eggNOG" id="COG1526">
    <property type="taxonomic scope" value="Bacteria"/>
</dbReference>
<dbReference type="HOGENOM" id="CLU_056887_2_0_6"/>
<dbReference type="OrthoDB" id="3197277at2"/>
<dbReference type="Proteomes" id="UP000000607">
    <property type="component" value="Chromosome"/>
</dbReference>
<dbReference type="GO" id="GO:0005737">
    <property type="term" value="C:cytoplasm"/>
    <property type="evidence" value="ECO:0007669"/>
    <property type="project" value="UniProtKB-SubCell"/>
</dbReference>
<dbReference type="GO" id="GO:0097163">
    <property type="term" value="F:sulfur carrier activity"/>
    <property type="evidence" value="ECO:0007669"/>
    <property type="project" value="UniProtKB-UniRule"/>
</dbReference>
<dbReference type="GO" id="GO:0016783">
    <property type="term" value="F:sulfurtransferase activity"/>
    <property type="evidence" value="ECO:0007669"/>
    <property type="project" value="InterPro"/>
</dbReference>
<dbReference type="GO" id="GO:0006777">
    <property type="term" value="P:Mo-molybdopterin cofactor biosynthetic process"/>
    <property type="evidence" value="ECO:0007669"/>
    <property type="project" value="UniProtKB-UniRule"/>
</dbReference>
<dbReference type="Gene3D" id="3.10.20.10">
    <property type="match status" value="1"/>
</dbReference>
<dbReference type="Gene3D" id="3.40.140.10">
    <property type="entry name" value="Cytidine Deaminase, domain 2"/>
    <property type="match status" value="1"/>
</dbReference>
<dbReference type="HAMAP" id="MF_00187">
    <property type="entry name" value="FdhD"/>
    <property type="match status" value="1"/>
</dbReference>
<dbReference type="InterPro" id="IPR016193">
    <property type="entry name" value="Cytidine_deaminase-like"/>
</dbReference>
<dbReference type="InterPro" id="IPR003786">
    <property type="entry name" value="FdhD"/>
</dbReference>
<dbReference type="NCBIfam" id="TIGR00129">
    <property type="entry name" value="fdhD_narQ"/>
    <property type="match status" value="1"/>
</dbReference>
<dbReference type="PANTHER" id="PTHR30592">
    <property type="entry name" value="FORMATE DEHYDROGENASE"/>
    <property type="match status" value="1"/>
</dbReference>
<dbReference type="PANTHER" id="PTHR30592:SF1">
    <property type="entry name" value="SULFUR CARRIER PROTEIN FDHD"/>
    <property type="match status" value="1"/>
</dbReference>
<dbReference type="Pfam" id="PF02634">
    <property type="entry name" value="FdhD-NarQ"/>
    <property type="match status" value="1"/>
</dbReference>
<dbReference type="PIRSF" id="PIRSF015626">
    <property type="entry name" value="FdhD"/>
    <property type="match status" value="1"/>
</dbReference>
<dbReference type="SUPFAM" id="SSF53927">
    <property type="entry name" value="Cytidine deaminase-like"/>
    <property type="match status" value="1"/>
</dbReference>
<name>FDHD_MANSM</name>
<comment type="function">
    <text evidence="1">Required for formate dehydrogenase (FDH) activity. Acts as a sulfur carrier protein that transfers sulfur from IscS to the molybdenum cofactor prior to its insertion into FDH.</text>
</comment>
<comment type="subcellular location">
    <subcellularLocation>
        <location evidence="1">Cytoplasm</location>
    </subcellularLocation>
</comment>
<comment type="similarity">
    <text evidence="1">Belongs to the FdhD family.</text>
</comment>